<name>ERO1A_DANRE</name>
<proteinExistence type="evidence at transcript level"/>
<dbReference type="EC" id="1.8.4.-"/>
<dbReference type="EMBL" id="BC053166">
    <property type="protein sequence ID" value="AAH53166.1"/>
    <property type="molecule type" value="mRNA"/>
</dbReference>
<dbReference type="SMR" id="Q7T3D1"/>
<dbReference type="FunCoup" id="Q7T3D1">
    <property type="interactions" value="1748"/>
</dbReference>
<dbReference type="STRING" id="7955.ENSDARP00000015478"/>
<dbReference type="GlyCosmos" id="Q7T3D1">
    <property type="glycosylation" value="2 sites, No reported glycans"/>
</dbReference>
<dbReference type="PaxDb" id="7955-ENSDARP00000015478"/>
<dbReference type="AGR" id="ZFIN:ZDB-GENE-040426-1312"/>
<dbReference type="ZFIN" id="ZDB-GENE-040426-1312">
    <property type="gene designation" value="ero1a"/>
</dbReference>
<dbReference type="eggNOG" id="KOG2608">
    <property type="taxonomic scope" value="Eukaryota"/>
</dbReference>
<dbReference type="InParanoid" id="Q7T3D1"/>
<dbReference type="PhylomeDB" id="Q7T3D1"/>
<dbReference type="Reactome" id="R-DRE-3299685">
    <property type="pathway name" value="Detoxification of Reactive Oxygen Species"/>
</dbReference>
<dbReference type="PRO" id="PR:Q7T3D1"/>
<dbReference type="Proteomes" id="UP000000437">
    <property type="component" value="Unplaced"/>
</dbReference>
<dbReference type="GO" id="GO:0005789">
    <property type="term" value="C:endoplasmic reticulum membrane"/>
    <property type="evidence" value="ECO:0000318"/>
    <property type="project" value="GO_Central"/>
</dbReference>
<dbReference type="GO" id="GO:0071949">
    <property type="term" value="F:FAD binding"/>
    <property type="evidence" value="ECO:0007669"/>
    <property type="project" value="InterPro"/>
</dbReference>
<dbReference type="GO" id="GO:0015035">
    <property type="term" value="F:protein-disulfide reductase activity"/>
    <property type="evidence" value="ECO:0000318"/>
    <property type="project" value="GO_Central"/>
</dbReference>
<dbReference type="GO" id="GO:0016972">
    <property type="term" value="F:thiol oxidase activity"/>
    <property type="evidence" value="ECO:0007669"/>
    <property type="project" value="InterPro"/>
</dbReference>
<dbReference type="GO" id="GO:0034975">
    <property type="term" value="P:protein folding in endoplasmic reticulum"/>
    <property type="evidence" value="ECO:0000318"/>
    <property type="project" value="GO_Central"/>
</dbReference>
<dbReference type="InterPro" id="IPR007266">
    <property type="entry name" value="Ero1"/>
</dbReference>
<dbReference type="InterPro" id="IPR037192">
    <property type="entry name" value="ERO1-like_sf"/>
</dbReference>
<dbReference type="PANTHER" id="PTHR12613:SF1">
    <property type="entry name" value="ERO1-LIKE PROTEIN ALPHA"/>
    <property type="match status" value="1"/>
</dbReference>
<dbReference type="PANTHER" id="PTHR12613">
    <property type="entry name" value="ERO1-RELATED"/>
    <property type="match status" value="1"/>
</dbReference>
<dbReference type="Pfam" id="PF04137">
    <property type="entry name" value="ERO1"/>
    <property type="match status" value="1"/>
</dbReference>
<dbReference type="PIRSF" id="PIRSF017205">
    <property type="entry name" value="ERO1"/>
    <property type="match status" value="1"/>
</dbReference>
<dbReference type="SUPFAM" id="SSF110019">
    <property type="entry name" value="ERO1-like"/>
    <property type="match status" value="1"/>
</dbReference>
<organism>
    <name type="scientific">Danio rerio</name>
    <name type="common">Zebrafish</name>
    <name type="synonym">Brachydanio rerio</name>
    <dbReference type="NCBI Taxonomy" id="7955"/>
    <lineage>
        <taxon>Eukaryota</taxon>
        <taxon>Metazoa</taxon>
        <taxon>Chordata</taxon>
        <taxon>Craniata</taxon>
        <taxon>Vertebrata</taxon>
        <taxon>Euteleostomi</taxon>
        <taxon>Actinopterygii</taxon>
        <taxon>Neopterygii</taxon>
        <taxon>Teleostei</taxon>
        <taxon>Ostariophysi</taxon>
        <taxon>Cypriniformes</taxon>
        <taxon>Danionidae</taxon>
        <taxon>Danioninae</taxon>
        <taxon>Danio</taxon>
    </lineage>
</organism>
<reference key="1">
    <citation type="submission" date="2003-06" db="EMBL/GenBank/DDBJ databases">
        <authorList>
            <consortium name="NIH - Zebrafish Gene Collection (ZGC) project"/>
        </authorList>
    </citation>
    <scope>NUCLEOTIDE SEQUENCE [LARGE SCALE MRNA]</scope>
    <source>
        <tissue>Kidney</tissue>
    </source>
</reference>
<comment type="function">
    <text evidence="1">Oxidoreductase involved in disulfide bond formation in the endoplasmic reticulum. Efficiently reoxidizes P4HB/PDI, the enzyme catalyzing protein disulfide formation, in order to allow P4HB to sustain additional rounds of disulfide formation. Following P4HB reoxidation, passes its electrons to molecular oxygen via FAD, leading to the production of reactive oxygen species (ROS) in the cell. Required for the folding of immunoglobulins (By similarity).</text>
</comment>
<comment type="cofactor">
    <cofactor evidence="2">
        <name>FAD</name>
        <dbReference type="ChEBI" id="CHEBI:57692"/>
    </cofactor>
</comment>
<comment type="activity regulation">
    <text evidence="1">Enzyme activity is tightly regulated to prevent the accumulation of reactive oxygen species in the endoplasmic reticulum. Reversibly down-regulated by the formation of disulfide bonds between the active site Cys-86 and Cys-123, and between Cys-91 and Cys-96. Glutathione may be required to regulate its activity in the endoplasmic reticulum (By similarity).</text>
</comment>
<comment type="subunit">
    <text evidence="1">Predominantly monomer. May function both as a monomer and a homodimer (By similarity).</text>
</comment>
<comment type="subcellular location">
    <subcellularLocation>
        <location evidence="1">Endoplasmic reticulum membrane</location>
        <topology evidence="1">Peripheral membrane protein</topology>
        <orientation evidence="1">Lumenal side</orientation>
    </subcellularLocation>
</comment>
<comment type="PTM">
    <text evidence="1">The Cys-86/Cys-91 and Cys-385/Cys-388 disulfide bonds constitute the redox-active center. The Cys-86/Cys-91 disulfide bond may accept electron from protein disulfide isomerase (PDI) and funnel them to the active site disulfide Cys-385/Cys-388 (By similarity).</text>
</comment>
<comment type="similarity">
    <text evidence="4">Belongs to the EROs family.</text>
</comment>
<protein>
    <recommendedName>
        <fullName>ERO1-like protein alpha</fullName>
        <shortName>ERO1-L</shortName>
        <shortName>ERO1-L-alpha</shortName>
        <ecNumber>1.8.4.-</ecNumber>
    </recommendedName>
    <alternativeName>
        <fullName evidence="2">Endoplasmic reticulum oxidoreductase alpha</fullName>
    </alternativeName>
    <alternativeName>
        <fullName>Endoplasmic reticulum oxidoreductin-1-like protein</fullName>
    </alternativeName>
    <alternativeName>
        <fullName>Oxidoreductin-1-L-alpha</fullName>
    </alternativeName>
</protein>
<keyword id="KW-1015">Disulfide bond</keyword>
<keyword id="KW-0249">Electron transport</keyword>
<keyword id="KW-0256">Endoplasmic reticulum</keyword>
<keyword id="KW-0274">FAD</keyword>
<keyword id="KW-0285">Flavoprotein</keyword>
<keyword id="KW-0325">Glycoprotein</keyword>
<keyword id="KW-0472">Membrane</keyword>
<keyword id="KW-0560">Oxidoreductase</keyword>
<keyword id="KW-0676">Redox-active center</keyword>
<keyword id="KW-1185">Reference proteome</keyword>
<keyword id="KW-0732">Signal</keyword>
<keyword id="KW-0813">Transport</keyword>
<evidence type="ECO:0000250" key="1"/>
<evidence type="ECO:0000250" key="2">
    <source>
        <dbReference type="UniProtKB" id="Q96HE7"/>
    </source>
</evidence>
<evidence type="ECO:0000255" key="3"/>
<evidence type="ECO:0000305" key="4"/>
<gene>
    <name evidence="2" type="primary">ero1a</name>
    <name type="synonym">ero1l</name>
</gene>
<feature type="signal peptide" evidence="3">
    <location>
        <begin position="1"/>
        <end position="20"/>
    </location>
</feature>
<feature type="chain" id="PRO_0000368275" description="ERO1-like protein alpha">
    <location>
        <begin position="21"/>
        <end position="489"/>
    </location>
</feature>
<feature type="binding site" evidence="2">
    <location>
        <position position="179"/>
    </location>
    <ligand>
        <name>FAD</name>
        <dbReference type="ChEBI" id="CHEBI:57692"/>
    </ligand>
</feature>
<feature type="binding site" evidence="2">
    <location>
        <position position="181"/>
    </location>
    <ligand>
        <name>FAD</name>
        <dbReference type="ChEBI" id="CHEBI:57692"/>
    </ligand>
</feature>
<feature type="binding site" evidence="2">
    <location>
        <position position="192"/>
    </location>
    <ligand>
        <name>FAD</name>
        <dbReference type="ChEBI" id="CHEBI:57692"/>
    </ligand>
</feature>
<feature type="binding site" evidence="2">
    <location>
        <position position="243"/>
    </location>
    <ligand>
        <name>FAD</name>
        <dbReference type="ChEBI" id="CHEBI:57692"/>
    </ligand>
</feature>
<feature type="binding site" evidence="2">
    <location>
        <position position="246"/>
    </location>
    <ligand>
        <name>FAD</name>
        <dbReference type="ChEBI" id="CHEBI:57692"/>
    </ligand>
</feature>
<feature type="binding site" evidence="2">
    <location>
        <position position="278"/>
    </location>
    <ligand>
        <name>FAD</name>
        <dbReference type="ChEBI" id="CHEBI:57692"/>
    </ligand>
</feature>
<feature type="binding site" evidence="2">
    <location>
        <position position="291"/>
    </location>
    <ligand>
        <name>FAD</name>
        <dbReference type="ChEBI" id="CHEBI:57692"/>
    </ligand>
</feature>
<feature type="glycosylation site" description="N-linked (GlcNAc...) asparagine" evidence="3">
    <location>
        <position position="271"/>
    </location>
</feature>
<feature type="glycosylation site" description="N-linked (GlcNAc...) asparagine" evidence="3">
    <location>
        <position position="375"/>
    </location>
</feature>
<feature type="disulfide bond" evidence="2">
    <location>
        <begin position="27"/>
        <end position="40"/>
    </location>
</feature>
<feature type="disulfide bond" evidence="2">
    <location>
        <begin position="29"/>
        <end position="38"/>
    </location>
</feature>
<feature type="disulfide bond" evidence="2">
    <location>
        <begin position="77"/>
        <end position="382"/>
    </location>
</feature>
<feature type="disulfide bond" description="Alternate" evidence="2">
    <location>
        <begin position="86"/>
        <end position="123"/>
    </location>
</feature>
<feature type="disulfide bond" description="Redox-active; alternate" evidence="2">
    <location>
        <begin position="86"/>
        <end position="91"/>
    </location>
</feature>
<feature type="disulfide bond" description="Alternate" evidence="2">
    <location>
        <begin position="91"/>
        <end position="96"/>
    </location>
</feature>
<feature type="disulfide bond" evidence="2">
    <location>
        <begin position="200"/>
        <end position="232"/>
    </location>
</feature>
<feature type="disulfide bond" description="Redox-active" evidence="2">
    <location>
        <begin position="385"/>
        <end position="388"/>
    </location>
</feature>
<accession>Q7T3D1</accession>
<sequence length="489" mass="56589">METCVLLLGLFLTSVHVTTAGSAAHRCFCQVTGTLDDCACDVETIDKFNNKDIFPKLQKLLSSDYFRFYKVNLNNGCPFWTDHSQCGLKYCAVKPCSPDEVPEGLKSSSYKYSEKASHDTEECEKAEKLGAVNGSLSDETRQALEEWKKYDDESDRFCMLDDEDSPESQYVDLLLNPERFTGYKGAEAWRIWNSIYEENCFKPYSVNRPLNPLASNSGDDGQGFYRWLEGLCVEKRAFFRLISGLHASINIHLSARYLLDENWFEMKWGHNVSEFQQRFDEDLTKGEGPKRLRNLYFLYLIELRALAKILPYFERSTFQLYTGQDTQDDQNKKLLLELLHVAKSFPLHFDETALFAGNNKEAMKLKEDFKLTFKNISRIMDCVECFKCRLWGKLQTQGLGTALKILFSERQIEAMPNKQHQSIISAQSAGNCVFVQRFRKNLHKCQRVEELQIVVVETQTVTVKMFQERATVQTDMHKHMTFPMFGYIQ</sequence>